<gene>
    <name evidence="1" type="primary">speB</name>
    <name type="ordered locus">EFER_2871</name>
</gene>
<evidence type="ECO:0000255" key="1">
    <source>
        <dbReference type="HAMAP-Rule" id="MF_01418"/>
    </source>
</evidence>
<accession>B7LPE7</accession>
<sequence>MSTLGHQYDNSLVSNAFGFLRLPMNFQPYDSDADWVITGVPFDMATSGRAGGRHGPAAIRQVSTNLAWEHNRFPWNFDMRERLNVVDCGDLVYAFGDAREMSEKLQAHAEKLLAAGKRMLSFGGDHFVTLPLLRAHAKHFGKMALVHFDAHTDTYANGCEFDHGTMFYTAPKEGLIDPNHSVQIGIRTEFDKDNGFTVLDACQVNDRSVDDVIAQVKQIVGDMPVYLTFDIDCLDPAFAPGTGTPVIGGLTSDRAIKLVRGLKDLNIVGMDVVEVAPAYDQSEITALAAATLALEMLYIQAAKKGE</sequence>
<feature type="chain" id="PRO_1000145615" description="Agmatinase">
    <location>
        <begin position="1"/>
        <end position="306"/>
    </location>
</feature>
<feature type="binding site" evidence="1">
    <location>
        <position position="126"/>
    </location>
    <ligand>
        <name>Mn(2+)</name>
        <dbReference type="ChEBI" id="CHEBI:29035"/>
    </ligand>
</feature>
<feature type="binding site" evidence="1">
    <location>
        <position position="149"/>
    </location>
    <ligand>
        <name>Mn(2+)</name>
        <dbReference type="ChEBI" id="CHEBI:29035"/>
    </ligand>
</feature>
<feature type="binding site" evidence="1">
    <location>
        <position position="151"/>
    </location>
    <ligand>
        <name>Mn(2+)</name>
        <dbReference type="ChEBI" id="CHEBI:29035"/>
    </ligand>
</feature>
<feature type="binding site" evidence="1">
    <location>
        <position position="153"/>
    </location>
    <ligand>
        <name>Mn(2+)</name>
        <dbReference type="ChEBI" id="CHEBI:29035"/>
    </ligand>
</feature>
<feature type="binding site" evidence="1">
    <location>
        <position position="230"/>
    </location>
    <ligand>
        <name>Mn(2+)</name>
        <dbReference type="ChEBI" id="CHEBI:29035"/>
    </ligand>
</feature>
<feature type="binding site" evidence="1">
    <location>
        <position position="232"/>
    </location>
    <ligand>
        <name>Mn(2+)</name>
        <dbReference type="ChEBI" id="CHEBI:29035"/>
    </ligand>
</feature>
<proteinExistence type="inferred from homology"/>
<reference key="1">
    <citation type="journal article" date="2009" name="PLoS Genet.">
        <title>Organised genome dynamics in the Escherichia coli species results in highly diverse adaptive paths.</title>
        <authorList>
            <person name="Touchon M."/>
            <person name="Hoede C."/>
            <person name="Tenaillon O."/>
            <person name="Barbe V."/>
            <person name="Baeriswyl S."/>
            <person name="Bidet P."/>
            <person name="Bingen E."/>
            <person name="Bonacorsi S."/>
            <person name="Bouchier C."/>
            <person name="Bouvet O."/>
            <person name="Calteau A."/>
            <person name="Chiapello H."/>
            <person name="Clermont O."/>
            <person name="Cruveiller S."/>
            <person name="Danchin A."/>
            <person name="Diard M."/>
            <person name="Dossat C."/>
            <person name="Karoui M.E."/>
            <person name="Frapy E."/>
            <person name="Garry L."/>
            <person name="Ghigo J.M."/>
            <person name="Gilles A.M."/>
            <person name="Johnson J."/>
            <person name="Le Bouguenec C."/>
            <person name="Lescat M."/>
            <person name="Mangenot S."/>
            <person name="Martinez-Jehanne V."/>
            <person name="Matic I."/>
            <person name="Nassif X."/>
            <person name="Oztas S."/>
            <person name="Petit M.A."/>
            <person name="Pichon C."/>
            <person name="Rouy Z."/>
            <person name="Ruf C.S."/>
            <person name="Schneider D."/>
            <person name="Tourret J."/>
            <person name="Vacherie B."/>
            <person name="Vallenet D."/>
            <person name="Medigue C."/>
            <person name="Rocha E.P.C."/>
            <person name="Denamur E."/>
        </authorList>
    </citation>
    <scope>NUCLEOTIDE SEQUENCE [LARGE SCALE GENOMIC DNA]</scope>
    <source>
        <strain>ATCC 35469 / DSM 13698 / BCRC 15582 / CCUG 18766 / IAM 14443 / JCM 21226 / LMG 7866 / NBRC 102419 / NCTC 12128 / CDC 0568-73</strain>
    </source>
</reference>
<protein>
    <recommendedName>
        <fullName evidence="1">Agmatinase</fullName>
        <ecNumber evidence="1">3.5.3.11</ecNumber>
    </recommendedName>
    <alternativeName>
        <fullName evidence="1">Agmatine ureohydrolase</fullName>
        <shortName evidence="1">AUH</shortName>
    </alternativeName>
</protein>
<name>SPEB_ESCF3</name>
<organism>
    <name type="scientific">Escherichia fergusonii (strain ATCC 35469 / DSM 13698 / CCUG 18766 / IAM 14443 / JCM 21226 / LMG 7866 / NBRC 102419 / NCTC 12128 / CDC 0568-73)</name>
    <dbReference type="NCBI Taxonomy" id="585054"/>
    <lineage>
        <taxon>Bacteria</taxon>
        <taxon>Pseudomonadati</taxon>
        <taxon>Pseudomonadota</taxon>
        <taxon>Gammaproteobacteria</taxon>
        <taxon>Enterobacterales</taxon>
        <taxon>Enterobacteriaceae</taxon>
        <taxon>Escherichia</taxon>
    </lineage>
</organism>
<keyword id="KW-0378">Hydrolase</keyword>
<keyword id="KW-0464">Manganese</keyword>
<keyword id="KW-0479">Metal-binding</keyword>
<keyword id="KW-0620">Polyamine biosynthesis</keyword>
<keyword id="KW-0661">Putrescine biosynthesis</keyword>
<keyword id="KW-0745">Spermidine biosynthesis</keyword>
<comment type="function">
    <text evidence="1">Catalyzes the formation of putrescine from agmatine.</text>
</comment>
<comment type="catalytic activity">
    <reaction evidence="1">
        <text>agmatine + H2O = urea + putrescine</text>
        <dbReference type="Rhea" id="RHEA:13929"/>
        <dbReference type="ChEBI" id="CHEBI:15377"/>
        <dbReference type="ChEBI" id="CHEBI:16199"/>
        <dbReference type="ChEBI" id="CHEBI:58145"/>
        <dbReference type="ChEBI" id="CHEBI:326268"/>
        <dbReference type="EC" id="3.5.3.11"/>
    </reaction>
</comment>
<comment type="cofactor">
    <cofactor evidence="1">
        <name>Mn(2+)</name>
        <dbReference type="ChEBI" id="CHEBI:29035"/>
    </cofactor>
</comment>
<comment type="pathway">
    <text evidence="1">Amine and polyamine biosynthesis; putrescine biosynthesis via agmatine pathway; putrescine from agmatine: step 1/1.</text>
</comment>
<comment type="similarity">
    <text evidence="1">Belongs to the arginase family. Agmatinase subfamily.</text>
</comment>
<dbReference type="EC" id="3.5.3.11" evidence="1"/>
<dbReference type="EMBL" id="CU928158">
    <property type="protein sequence ID" value="CAQ90364.1"/>
    <property type="molecule type" value="Genomic_DNA"/>
</dbReference>
<dbReference type="RefSeq" id="WP_000105566.1">
    <property type="nucleotide sequence ID" value="NC_011740.1"/>
</dbReference>
<dbReference type="SMR" id="B7LPE7"/>
<dbReference type="GeneID" id="89517749"/>
<dbReference type="KEGG" id="efe:EFER_2871"/>
<dbReference type="HOGENOM" id="CLU_039478_0_0_6"/>
<dbReference type="OrthoDB" id="9789727at2"/>
<dbReference type="UniPathway" id="UPA00534">
    <property type="reaction ID" value="UER00287"/>
</dbReference>
<dbReference type="Proteomes" id="UP000000745">
    <property type="component" value="Chromosome"/>
</dbReference>
<dbReference type="GO" id="GO:0008783">
    <property type="term" value="F:agmatinase activity"/>
    <property type="evidence" value="ECO:0007669"/>
    <property type="project" value="UniProtKB-UniRule"/>
</dbReference>
<dbReference type="GO" id="GO:0030145">
    <property type="term" value="F:manganese ion binding"/>
    <property type="evidence" value="ECO:0007669"/>
    <property type="project" value="InterPro"/>
</dbReference>
<dbReference type="GO" id="GO:0033389">
    <property type="term" value="P:putrescine biosynthetic process from arginine, via agmatine"/>
    <property type="evidence" value="ECO:0007669"/>
    <property type="project" value="TreeGrafter"/>
</dbReference>
<dbReference type="GO" id="GO:0008295">
    <property type="term" value="P:spermidine biosynthetic process"/>
    <property type="evidence" value="ECO:0007669"/>
    <property type="project" value="UniProtKB-UniRule"/>
</dbReference>
<dbReference type="CDD" id="cd11592">
    <property type="entry name" value="Agmatinase_PAH"/>
    <property type="match status" value="1"/>
</dbReference>
<dbReference type="FunFam" id="3.40.800.10:FF:000001">
    <property type="entry name" value="Agmatinase"/>
    <property type="match status" value="1"/>
</dbReference>
<dbReference type="Gene3D" id="3.40.800.10">
    <property type="entry name" value="Ureohydrolase domain"/>
    <property type="match status" value="1"/>
</dbReference>
<dbReference type="HAMAP" id="MF_01418">
    <property type="entry name" value="SpeB"/>
    <property type="match status" value="1"/>
</dbReference>
<dbReference type="InterPro" id="IPR023694">
    <property type="entry name" value="Agmatinase"/>
</dbReference>
<dbReference type="InterPro" id="IPR005925">
    <property type="entry name" value="Agmatinase-rel"/>
</dbReference>
<dbReference type="InterPro" id="IPR006035">
    <property type="entry name" value="Ureohydrolase"/>
</dbReference>
<dbReference type="InterPro" id="IPR023696">
    <property type="entry name" value="Ureohydrolase_dom_sf"/>
</dbReference>
<dbReference type="InterPro" id="IPR020855">
    <property type="entry name" value="Ureohydrolase_Mn_BS"/>
</dbReference>
<dbReference type="NCBIfam" id="TIGR01230">
    <property type="entry name" value="agmatinase"/>
    <property type="match status" value="1"/>
</dbReference>
<dbReference type="NCBIfam" id="NF002564">
    <property type="entry name" value="PRK02190.1"/>
    <property type="match status" value="1"/>
</dbReference>
<dbReference type="PANTHER" id="PTHR11358">
    <property type="entry name" value="ARGINASE/AGMATINASE"/>
    <property type="match status" value="1"/>
</dbReference>
<dbReference type="PANTHER" id="PTHR11358:SF26">
    <property type="entry name" value="GUANIDINO ACID HYDROLASE, MITOCHONDRIAL"/>
    <property type="match status" value="1"/>
</dbReference>
<dbReference type="Pfam" id="PF00491">
    <property type="entry name" value="Arginase"/>
    <property type="match status" value="1"/>
</dbReference>
<dbReference type="PIRSF" id="PIRSF036979">
    <property type="entry name" value="Arginase"/>
    <property type="match status" value="1"/>
</dbReference>
<dbReference type="SUPFAM" id="SSF52768">
    <property type="entry name" value="Arginase/deacetylase"/>
    <property type="match status" value="1"/>
</dbReference>
<dbReference type="PROSITE" id="PS01053">
    <property type="entry name" value="ARGINASE_1"/>
    <property type="match status" value="1"/>
</dbReference>
<dbReference type="PROSITE" id="PS51409">
    <property type="entry name" value="ARGINASE_2"/>
    <property type="match status" value="1"/>
</dbReference>